<gene>
    <name evidence="1" type="primary">cysS</name>
    <name type="ordered locus">ECP_0587</name>
</gene>
<sequence>MLKIFNTLTRQKEEFKPIHAGEVGMYVCGITVYDLCHIGHGRTFVAFDVVARYLRFLGYKLKYVRNITDIDDKIIKRANENGESFVALVDRMIAEMHKDFDALNILRPDMEPRATHHIAEIIELTEQLIAKGHAYVADNGDVMFDVPTDPTYGVLSRQDLDQLQAGARVDVVDDKRNPMDFVLWKMSKEGEPSWPSPWGAGRPGWHIECSAMNCKQLGNHFDIHGGGSDLMFPHHENEIAQSTCAHDGLYVNYWMHSGMVMVDREKMSKSLGNFFTVRDVLKYYDAETVRYFLMSGHYRSQLNYSEENLKQARAALERLYTALRGTDKTVAPAGGEAFEARFIEAMDDDFNTPEAYSVLFDMAREVNRLKAEDMAAANAMASHLRKLSAVLGLLEQEPEAFLQSGAQADDSEVAEIEALIQQRLDARKAKDWAAADAARDRLNEMGIVLEDGPQGTTWRRK</sequence>
<protein>
    <recommendedName>
        <fullName evidence="1">Cysteine--tRNA ligase</fullName>
        <ecNumber evidence="1">6.1.1.16</ecNumber>
    </recommendedName>
    <alternativeName>
        <fullName evidence="1">Cysteinyl-tRNA synthetase</fullName>
        <shortName evidence="1">CysRS</shortName>
    </alternativeName>
</protein>
<keyword id="KW-0030">Aminoacyl-tRNA synthetase</keyword>
<keyword id="KW-0067">ATP-binding</keyword>
<keyword id="KW-0963">Cytoplasm</keyword>
<keyword id="KW-0436">Ligase</keyword>
<keyword id="KW-0479">Metal-binding</keyword>
<keyword id="KW-0547">Nucleotide-binding</keyword>
<keyword id="KW-0648">Protein biosynthesis</keyword>
<keyword id="KW-0862">Zinc</keyword>
<comment type="catalytic activity">
    <reaction evidence="1">
        <text>tRNA(Cys) + L-cysteine + ATP = L-cysteinyl-tRNA(Cys) + AMP + diphosphate</text>
        <dbReference type="Rhea" id="RHEA:17773"/>
        <dbReference type="Rhea" id="RHEA-COMP:9661"/>
        <dbReference type="Rhea" id="RHEA-COMP:9679"/>
        <dbReference type="ChEBI" id="CHEBI:30616"/>
        <dbReference type="ChEBI" id="CHEBI:33019"/>
        <dbReference type="ChEBI" id="CHEBI:35235"/>
        <dbReference type="ChEBI" id="CHEBI:78442"/>
        <dbReference type="ChEBI" id="CHEBI:78517"/>
        <dbReference type="ChEBI" id="CHEBI:456215"/>
        <dbReference type="EC" id="6.1.1.16"/>
    </reaction>
</comment>
<comment type="cofactor">
    <cofactor evidence="1">
        <name>Zn(2+)</name>
        <dbReference type="ChEBI" id="CHEBI:29105"/>
    </cofactor>
    <text evidence="1">Binds 1 zinc ion per subunit.</text>
</comment>
<comment type="subunit">
    <text evidence="1">Monomer.</text>
</comment>
<comment type="subcellular location">
    <subcellularLocation>
        <location evidence="1">Cytoplasm</location>
    </subcellularLocation>
</comment>
<comment type="similarity">
    <text evidence="1">Belongs to the class-I aminoacyl-tRNA synthetase family.</text>
</comment>
<accession>Q0TKB5</accession>
<dbReference type="EC" id="6.1.1.16" evidence="1"/>
<dbReference type="EMBL" id="CP000247">
    <property type="protein sequence ID" value="ABG68616.1"/>
    <property type="molecule type" value="Genomic_DNA"/>
</dbReference>
<dbReference type="RefSeq" id="WP_000912341.1">
    <property type="nucleotide sequence ID" value="NC_008253.1"/>
</dbReference>
<dbReference type="SMR" id="Q0TKB5"/>
<dbReference type="KEGG" id="ecp:ECP_0587"/>
<dbReference type="HOGENOM" id="CLU_013528_0_1_6"/>
<dbReference type="Proteomes" id="UP000009182">
    <property type="component" value="Chromosome"/>
</dbReference>
<dbReference type="GO" id="GO:0005829">
    <property type="term" value="C:cytosol"/>
    <property type="evidence" value="ECO:0007669"/>
    <property type="project" value="TreeGrafter"/>
</dbReference>
<dbReference type="GO" id="GO:0005524">
    <property type="term" value="F:ATP binding"/>
    <property type="evidence" value="ECO:0007669"/>
    <property type="project" value="UniProtKB-UniRule"/>
</dbReference>
<dbReference type="GO" id="GO:0004817">
    <property type="term" value="F:cysteine-tRNA ligase activity"/>
    <property type="evidence" value="ECO:0007669"/>
    <property type="project" value="UniProtKB-UniRule"/>
</dbReference>
<dbReference type="GO" id="GO:0008270">
    <property type="term" value="F:zinc ion binding"/>
    <property type="evidence" value="ECO:0007669"/>
    <property type="project" value="UniProtKB-UniRule"/>
</dbReference>
<dbReference type="GO" id="GO:0006423">
    <property type="term" value="P:cysteinyl-tRNA aminoacylation"/>
    <property type="evidence" value="ECO:0007669"/>
    <property type="project" value="UniProtKB-UniRule"/>
</dbReference>
<dbReference type="CDD" id="cd07963">
    <property type="entry name" value="Anticodon_Ia_Cys"/>
    <property type="match status" value="1"/>
</dbReference>
<dbReference type="CDD" id="cd00672">
    <property type="entry name" value="CysRS_core"/>
    <property type="match status" value="1"/>
</dbReference>
<dbReference type="FunFam" id="1.20.120.1910:FF:000001">
    <property type="entry name" value="Cysteine--tRNA ligase"/>
    <property type="match status" value="1"/>
</dbReference>
<dbReference type="FunFam" id="3.40.50.620:FF:000009">
    <property type="entry name" value="Cysteine--tRNA ligase"/>
    <property type="match status" value="1"/>
</dbReference>
<dbReference type="Gene3D" id="1.20.120.1910">
    <property type="entry name" value="Cysteine-tRNA ligase, C-terminal anti-codon recognition domain"/>
    <property type="match status" value="1"/>
</dbReference>
<dbReference type="Gene3D" id="3.40.50.620">
    <property type="entry name" value="HUPs"/>
    <property type="match status" value="1"/>
</dbReference>
<dbReference type="HAMAP" id="MF_00041">
    <property type="entry name" value="Cys_tRNA_synth"/>
    <property type="match status" value="1"/>
</dbReference>
<dbReference type="InterPro" id="IPR015803">
    <property type="entry name" value="Cys-tRNA-ligase"/>
</dbReference>
<dbReference type="InterPro" id="IPR015273">
    <property type="entry name" value="Cys-tRNA-synt_Ia_DALR"/>
</dbReference>
<dbReference type="InterPro" id="IPR024909">
    <property type="entry name" value="Cys-tRNA/MSH_ligase"/>
</dbReference>
<dbReference type="InterPro" id="IPR056411">
    <property type="entry name" value="CysS_C"/>
</dbReference>
<dbReference type="InterPro" id="IPR014729">
    <property type="entry name" value="Rossmann-like_a/b/a_fold"/>
</dbReference>
<dbReference type="InterPro" id="IPR032678">
    <property type="entry name" value="tRNA-synt_1_cat_dom"/>
</dbReference>
<dbReference type="InterPro" id="IPR009080">
    <property type="entry name" value="tRNAsynth_Ia_anticodon-bd"/>
</dbReference>
<dbReference type="NCBIfam" id="TIGR00435">
    <property type="entry name" value="cysS"/>
    <property type="match status" value="1"/>
</dbReference>
<dbReference type="PANTHER" id="PTHR10890:SF3">
    <property type="entry name" value="CYSTEINE--TRNA LIGASE, CYTOPLASMIC"/>
    <property type="match status" value="1"/>
</dbReference>
<dbReference type="PANTHER" id="PTHR10890">
    <property type="entry name" value="CYSTEINYL-TRNA SYNTHETASE"/>
    <property type="match status" value="1"/>
</dbReference>
<dbReference type="Pfam" id="PF23493">
    <property type="entry name" value="CysS_C"/>
    <property type="match status" value="1"/>
</dbReference>
<dbReference type="Pfam" id="PF09190">
    <property type="entry name" value="DALR_2"/>
    <property type="match status" value="1"/>
</dbReference>
<dbReference type="Pfam" id="PF01406">
    <property type="entry name" value="tRNA-synt_1e"/>
    <property type="match status" value="1"/>
</dbReference>
<dbReference type="PRINTS" id="PR00983">
    <property type="entry name" value="TRNASYNTHCYS"/>
</dbReference>
<dbReference type="SMART" id="SM00840">
    <property type="entry name" value="DALR_2"/>
    <property type="match status" value="1"/>
</dbReference>
<dbReference type="SUPFAM" id="SSF47323">
    <property type="entry name" value="Anticodon-binding domain of a subclass of class I aminoacyl-tRNA synthetases"/>
    <property type="match status" value="1"/>
</dbReference>
<dbReference type="SUPFAM" id="SSF52374">
    <property type="entry name" value="Nucleotidylyl transferase"/>
    <property type="match status" value="1"/>
</dbReference>
<feature type="chain" id="PRO_0000332822" description="Cysteine--tRNA ligase">
    <location>
        <begin position="1"/>
        <end position="461"/>
    </location>
</feature>
<feature type="short sequence motif" description="'HIGH' region">
    <location>
        <begin position="30"/>
        <end position="40"/>
    </location>
</feature>
<feature type="short sequence motif" description="'KMSKS' region">
    <location>
        <begin position="266"/>
        <end position="270"/>
    </location>
</feature>
<feature type="binding site" evidence="1">
    <location>
        <position position="28"/>
    </location>
    <ligand>
        <name>Zn(2+)</name>
        <dbReference type="ChEBI" id="CHEBI:29105"/>
    </ligand>
</feature>
<feature type="binding site" evidence="1">
    <location>
        <position position="209"/>
    </location>
    <ligand>
        <name>Zn(2+)</name>
        <dbReference type="ChEBI" id="CHEBI:29105"/>
    </ligand>
</feature>
<feature type="binding site" evidence="1">
    <location>
        <position position="234"/>
    </location>
    <ligand>
        <name>Zn(2+)</name>
        <dbReference type="ChEBI" id="CHEBI:29105"/>
    </ligand>
</feature>
<feature type="binding site" evidence="1">
    <location>
        <position position="238"/>
    </location>
    <ligand>
        <name>Zn(2+)</name>
        <dbReference type="ChEBI" id="CHEBI:29105"/>
    </ligand>
</feature>
<feature type="binding site" evidence="1">
    <location>
        <position position="269"/>
    </location>
    <ligand>
        <name>ATP</name>
        <dbReference type="ChEBI" id="CHEBI:30616"/>
    </ligand>
</feature>
<evidence type="ECO:0000255" key="1">
    <source>
        <dbReference type="HAMAP-Rule" id="MF_00041"/>
    </source>
</evidence>
<organism>
    <name type="scientific">Escherichia coli O6:K15:H31 (strain 536 / UPEC)</name>
    <dbReference type="NCBI Taxonomy" id="362663"/>
    <lineage>
        <taxon>Bacteria</taxon>
        <taxon>Pseudomonadati</taxon>
        <taxon>Pseudomonadota</taxon>
        <taxon>Gammaproteobacteria</taxon>
        <taxon>Enterobacterales</taxon>
        <taxon>Enterobacteriaceae</taxon>
        <taxon>Escherichia</taxon>
    </lineage>
</organism>
<proteinExistence type="inferred from homology"/>
<name>SYC_ECOL5</name>
<reference key="1">
    <citation type="journal article" date="2006" name="Mol. Microbiol.">
        <title>Role of pathogenicity island-associated integrases in the genome plasticity of uropathogenic Escherichia coli strain 536.</title>
        <authorList>
            <person name="Hochhut B."/>
            <person name="Wilde C."/>
            <person name="Balling G."/>
            <person name="Middendorf B."/>
            <person name="Dobrindt U."/>
            <person name="Brzuszkiewicz E."/>
            <person name="Gottschalk G."/>
            <person name="Carniel E."/>
            <person name="Hacker J."/>
        </authorList>
    </citation>
    <scope>NUCLEOTIDE SEQUENCE [LARGE SCALE GENOMIC DNA]</scope>
    <source>
        <strain>536 / UPEC</strain>
    </source>
</reference>